<accession>Q8CI12</accession>
<gene>
    <name type="primary">Smtnl2</name>
</gene>
<evidence type="ECO:0000255" key="1"/>
<evidence type="ECO:0000255" key="2">
    <source>
        <dbReference type="PROSITE-ProRule" id="PRU00044"/>
    </source>
</evidence>
<evidence type="ECO:0000256" key="3">
    <source>
        <dbReference type="SAM" id="MobiDB-lite"/>
    </source>
</evidence>
<evidence type="ECO:0000305" key="4"/>
<evidence type="ECO:0007744" key="5">
    <source>
    </source>
</evidence>
<evidence type="ECO:0007744" key="6">
    <source>
    </source>
</evidence>
<name>SMTL2_MOUSE</name>
<protein>
    <recommendedName>
        <fullName>Smoothelin-like protein 2</fullName>
    </recommendedName>
</protein>
<feature type="chain" id="PRO_0000317279" description="Smoothelin-like protein 2">
    <location>
        <begin position="1"/>
        <end position="456"/>
    </location>
</feature>
<feature type="domain" description="Calponin-homology (CH)" evidence="2">
    <location>
        <begin position="346"/>
        <end position="453"/>
    </location>
</feature>
<feature type="region of interest" description="Disordered" evidence="3">
    <location>
        <begin position="120"/>
        <end position="140"/>
    </location>
</feature>
<feature type="region of interest" description="Disordered" evidence="3">
    <location>
        <begin position="154"/>
        <end position="190"/>
    </location>
</feature>
<feature type="region of interest" description="Disordered" evidence="3">
    <location>
        <begin position="220"/>
        <end position="310"/>
    </location>
</feature>
<feature type="coiled-coil region" evidence="1">
    <location>
        <begin position="24"/>
        <end position="88"/>
    </location>
</feature>
<feature type="compositionally biased region" description="Polar residues" evidence="3">
    <location>
        <begin position="120"/>
        <end position="129"/>
    </location>
</feature>
<feature type="compositionally biased region" description="Basic and acidic residues" evidence="3">
    <location>
        <begin position="131"/>
        <end position="140"/>
    </location>
</feature>
<feature type="compositionally biased region" description="Polar residues" evidence="3">
    <location>
        <begin position="163"/>
        <end position="174"/>
    </location>
</feature>
<feature type="compositionally biased region" description="Low complexity" evidence="3">
    <location>
        <begin position="242"/>
        <end position="251"/>
    </location>
</feature>
<feature type="compositionally biased region" description="Pro residues" evidence="3">
    <location>
        <begin position="268"/>
        <end position="279"/>
    </location>
</feature>
<feature type="compositionally biased region" description="Polar residues" evidence="3">
    <location>
        <begin position="298"/>
        <end position="308"/>
    </location>
</feature>
<feature type="modified residue" description="Phosphothreonine" evidence="6">
    <location>
        <position position="96"/>
    </location>
</feature>
<feature type="modified residue" description="Phosphoserine" evidence="6">
    <location>
        <position position="98"/>
    </location>
</feature>
<feature type="modified residue" description="Phosphoserine" evidence="6">
    <location>
        <position position="126"/>
    </location>
</feature>
<feature type="modified residue" description="Phosphoserine" evidence="6">
    <location>
        <position position="131"/>
    </location>
</feature>
<feature type="modified residue" description="Phosphoserine" evidence="6">
    <location>
        <position position="250"/>
    </location>
</feature>
<feature type="modified residue" description="Phosphoserine" evidence="6">
    <location>
        <position position="252"/>
    </location>
</feature>
<feature type="modified residue" description="Phosphoserine" evidence="6">
    <location>
        <position position="265"/>
    </location>
</feature>
<feature type="modified residue" description="Phosphothreonine" evidence="6">
    <location>
        <position position="270"/>
    </location>
</feature>
<feature type="modified residue" description="Phosphoserine" evidence="6">
    <location>
        <position position="274"/>
    </location>
</feature>
<feature type="modified residue" description="Phosphoserine" evidence="5 6">
    <location>
        <position position="339"/>
    </location>
</feature>
<sequence>MEPSPDAEEAHTVREALGRYEAALEGAVRALHEDMQGLQRGVERRVAEALRLAGPLARTVAELQRDNQRLQAQLERLTRQVEALGLATGVSPAPGTPSPPPAATVTDRAPRLGTARFSSHATFSLSGRSPSVEHDEASDLEVRRASNSCILENGHQLDAGPANGSSEVQTSSAQEPPRPRPVSLSLRMPHQPVTAVTRVSEKFSGETSASALSPTSAAIVGGFTPSPSEAISPWTPSPTEKSSSFTRSLSGSGYGAVTAGKRKDSPPLVTPPQSPPSSQPPAMTQAPRQGERRRELVRSQTLPRTSGAQARKALFEKWEQDTASKGKGETRAKLKRSQSFGVASASSIKQILLEWCRSKTVGYQHVDLQNFSSSWSDGMAFCALVHSFFPDAFDYNALSPTQRQKNFELAFTMAENLANCERLIEVEDMMVMGRKPDPMCVFTYVQSLYNHLRRFE</sequence>
<organism>
    <name type="scientific">Mus musculus</name>
    <name type="common">Mouse</name>
    <dbReference type="NCBI Taxonomy" id="10090"/>
    <lineage>
        <taxon>Eukaryota</taxon>
        <taxon>Metazoa</taxon>
        <taxon>Chordata</taxon>
        <taxon>Craniata</taxon>
        <taxon>Vertebrata</taxon>
        <taxon>Euteleostomi</taxon>
        <taxon>Mammalia</taxon>
        <taxon>Eutheria</taxon>
        <taxon>Euarchontoglires</taxon>
        <taxon>Glires</taxon>
        <taxon>Rodentia</taxon>
        <taxon>Myomorpha</taxon>
        <taxon>Muroidea</taxon>
        <taxon>Muridae</taxon>
        <taxon>Murinae</taxon>
        <taxon>Mus</taxon>
        <taxon>Mus</taxon>
    </lineage>
</organism>
<reference key="1">
    <citation type="journal article" date="2004" name="Genome Res.">
        <title>The status, quality, and expansion of the NIH full-length cDNA project: the Mammalian Gene Collection (MGC).</title>
        <authorList>
            <consortium name="The MGC Project Team"/>
        </authorList>
    </citation>
    <scope>NUCLEOTIDE SEQUENCE [LARGE SCALE MRNA]</scope>
    <source>
        <strain>FVB/N</strain>
        <tissue>Kidney</tissue>
    </source>
</reference>
<reference key="2">
    <citation type="journal article" date="2007" name="Proc. Natl. Acad. Sci. U.S.A.">
        <title>Large-scale phosphorylation analysis of mouse liver.</title>
        <authorList>
            <person name="Villen J."/>
            <person name="Beausoleil S.A."/>
            <person name="Gerber S.A."/>
            <person name="Gygi S.P."/>
        </authorList>
    </citation>
    <scope>PHOSPHORYLATION [LARGE SCALE ANALYSIS] AT SER-339</scope>
    <scope>IDENTIFICATION BY MASS SPECTROMETRY [LARGE SCALE ANALYSIS]</scope>
    <source>
        <tissue>Liver</tissue>
    </source>
</reference>
<reference key="3">
    <citation type="journal article" date="2010" name="Cell">
        <title>A tissue-specific atlas of mouse protein phosphorylation and expression.</title>
        <authorList>
            <person name="Huttlin E.L."/>
            <person name="Jedrychowski M.P."/>
            <person name="Elias J.E."/>
            <person name="Goswami T."/>
            <person name="Rad R."/>
            <person name="Beausoleil S.A."/>
            <person name="Villen J."/>
            <person name="Haas W."/>
            <person name="Sowa M.E."/>
            <person name="Gygi S.P."/>
        </authorList>
    </citation>
    <scope>PHOSPHORYLATION [LARGE SCALE ANALYSIS] AT THR-96; SER-98; SER-126; SER-131; SER-250; SER-252; SER-265; THR-270; SER-274 AND SER-339</scope>
    <scope>IDENTIFICATION BY MASS SPECTROMETRY [LARGE SCALE ANALYSIS]</scope>
    <source>
        <tissue>Brain</tissue>
        <tissue>Brown adipose tissue</tissue>
        <tissue>Heart</tissue>
        <tissue>Kidney</tissue>
        <tissue>Lung</tissue>
        <tissue>Pancreas</tissue>
        <tissue>Spleen</tissue>
        <tissue>Testis</tissue>
    </source>
</reference>
<proteinExistence type="evidence at protein level"/>
<dbReference type="EMBL" id="BC037993">
    <property type="protein sequence ID" value="AAH37993.1"/>
    <property type="molecule type" value="mRNA"/>
</dbReference>
<dbReference type="CCDS" id="CCDS24985.1"/>
<dbReference type="RefSeq" id="NP_808444.1">
    <property type="nucleotide sequence ID" value="NM_177776.3"/>
</dbReference>
<dbReference type="SMR" id="Q8CI12"/>
<dbReference type="BioGRID" id="234901">
    <property type="interactions" value="4"/>
</dbReference>
<dbReference type="FunCoup" id="Q8CI12">
    <property type="interactions" value="106"/>
</dbReference>
<dbReference type="STRING" id="10090.ENSMUSP00000059043"/>
<dbReference type="GlyGen" id="Q8CI12">
    <property type="glycosylation" value="2 sites"/>
</dbReference>
<dbReference type="iPTMnet" id="Q8CI12"/>
<dbReference type="PhosphoSitePlus" id="Q8CI12"/>
<dbReference type="jPOST" id="Q8CI12"/>
<dbReference type="PaxDb" id="10090-ENSMUSP00000059043"/>
<dbReference type="PeptideAtlas" id="Q8CI12"/>
<dbReference type="ProteomicsDB" id="257527"/>
<dbReference type="Antibodypedia" id="11245">
    <property type="antibodies" value="74 antibodies from 20 providers"/>
</dbReference>
<dbReference type="DNASU" id="276829"/>
<dbReference type="Ensembl" id="ENSMUST00000050226.7">
    <property type="protein sequence ID" value="ENSMUSP00000059043.7"/>
    <property type="gene ID" value="ENSMUSG00000045667.15"/>
</dbReference>
<dbReference type="GeneID" id="276829"/>
<dbReference type="KEGG" id="mmu:276829"/>
<dbReference type="UCSC" id="uc007jyv.1">
    <property type="organism name" value="mouse"/>
</dbReference>
<dbReference type="AGR" id="MGI:2442764"/>
<dbReference type="CTD" id="342527"/>
<dbReference type="MGI" id="MGI:2442764">
    <property type="gene designation" value="Smtnl2"/>
</dbReference>
<dbReference type="VEuPathDB" id="HostDB:ENSMUSG00000045667"/>
<dbReference type="eggNOG" id="KOG4678">
    <property type="taxonomic scope" value="Eukaryota"/>
</dbReference>
<dbReference type="GeneTree" id="ENSGT00940000154495"/>
<dbReference type="InParanoid" id="Q8CI12"/>
<dbReference type="OMA" id="APHQGER"/>
<dbReference type="OrthoDB" id="21607at2759"/>
<dbReference type="PhylomeDB" id="Q8CI12"/>
<dbReference type="TreeFam" id="TF316716"/>
<dbReference type="BioGRID-ORCS" id="276829">
    <property type="hits" value="1 hit in 77 CRISPR screens"/>
</dbReference>
<dbReference type="PRO" id="PR:Q8CI12"/>
<dbReference type="Proteomes" id="UP000000589">
    <property type="component" value="Chromosome 11"/>
</dbReference>
<dbReference type="RNAct" id="Q8CI12">
    <property type="molecule type" value="protein"/>
</dbReference>
<dbReference type="Bgee" id="ENSMUSG00000045667">
    <property type="expression patterns" value="Expressed in sternocleidomastoid and 156 other cell types or tissues"/>
</dbReference>
<dbReference type="ExpressionAtlas" id="Q8CI12">
    <property type="expression patterns" value="baseline and differential"/>
</dbReference>
<dbReference type="CDD" id="cd21261">
    <property type="entry name" value="CH_SMTNL2"/>
    <property type="match status" value="1"/>
</dbReference>
<dbReference type="FunFam" id="1.10.418.10:FF:000009">
    <property type="entry name" value="smoothelin isoform X2"/>
    <property type="match status" value="1"/>
</dbReference>
<dbReference type="Gene3D" id="1.10.418.10">
    <property type="entry name" value="Calponin-like domain"/>
    <property type="match status" value="1"/>
</dbReference>
<dbReference type="InterPro" id="IPR001715">
    <property type="entry name" value="CH_dom"/>
</dbReference>
<dbReference type="InterPro" id="IPR036872">
    <property type="entry name" value="CH_dom_sf"/>
</dbReference>
<dbReference type="InterPro" id="IPR050540">
    <property type="entry name" value="F-actin_Monoox_Mical"/>
</dbReference>
<dbReference type="PANTHER" id="PTHR23167">
    <property type="entry name" value="CALPONIN HOMOLOGY DOMAIN-CONTAINING PROTEIN DDB_G0272472-RELATED"/>
    <property type="match status" value="1"/>
</dbReference>
<dbReference type="PANTHER" id="PTHR23167:SF37">
    <property type="entry name" value="SMOOTHELIN-LIKE PROTEIN 2"/>
    <property type="match status" value="1"/>
</dbReference>
<dbReference type="Pfam" id="PF00307">
    <property type="entry name" value="CH"/>
    <property type="match status" value="1"/>
</dbReference>
<dbReference type="SMART" id="SM00033">
    <property type="entry name" value="CH"/>
    <property type="match status" value="1"/>
</dbReference>
<dbReference type="SUPFAM" id="SSF47576">
    <property type="entry name" value="Calponin-homology domain, CH-domain"/>
    <property type="match status" value="1"/>
</dbReference>
<dbReference type="PROSITE" id="PS50021">
    <property type="entry name" value="CH"/>
    <property type="match status" value="1"/>
</dbReference>
<keyword id="KW-0175">Coiled coil</keyword>
<keyword id="KW-0597">Phosphoprotein</keyword>
<keyword id="KW-1185">Reference proteome</keyword>
<comment type="similarity">
    <text evidence="4">Belongs to the smoothelin family.</text>
</comment>